<name>CBID_BRUAB</name>
<dbReference type="EC" id="2.1.1.195" evidence="1"/>
<dbReference type="EMBL" id="AE017223">
    <property type="protein sequence ID" value="AAX74634.1"/>
    <property type="molecule type" value="Genomic_DNA"/>
</dbReference>
<dbReference type="RefSeq" id="WP_002964416.1">
    <property type="nucleotide sequence ID" value="NC_006932.1"/>
</dbReference>
<dbReference type="SMR" id="Q57CK0"/>
<dbReference type="EnsemblBacteria" id="AAX74634">
    <property type="protein sequence ID" value="AAX74634"/>
    <property type="gene ID" value="BruAb1_1299"/>
</dbReference>
<dbReference type="KEGG" id="bmb:BruAb1_1299"/>
<dbReference type="HOGENOM" id="CLU_041273_0_0_5"/>
<dbReference type="UniPathway" id="UPA00148">
    <property type="reaction ID" value="UER00227"/>
</dbReference>
<dbReference type="Proteomes" id="UP000000540">
    <property type="component" value="Chromosome I"/>
</dbReference>
<dbReference type="GO" id="GO:0043780">
    <property type="term" value="F:cobalt-precorrin-5B C1-methyltransferase activity"/>
    <property type="evidence" value="ECO:0007669"/>
    <property type="project" value="RHEA"/>
</dbReference>
<dbReference type="GO" id="GO:0019251">
    <property type="term" value="P:anaerobic cobalamin biosynthetic process"/>
    <property type="evidence" value="ECO:0007669"/>
    <property type="project" value="UniProtKB-UniRule"/>
</dbReference>
<dbReference type="GO" id="GO:0032259">
    <property type="term" value="P:methylation"/>
    <property type="evidence" value="ECO:0007669"/>
    <property type="project" value="UniProtKB-KW"/>
</dbReference>
<dbReference type="Gene3D" id="3.30.2110.10">
    <property type="entry name" value="CbiD-like"/>
    <property type="match status" value="1"/>
</dbReference>
<dbReference type="HAMAP" id="MF_00787">
    <property type="entry name" value="CbiD"/>
    <property type="match status" value="1"/>
</dbReference>
<dbReference type="InterPro" id="IPR002748">
    <property type="entry name" value="CbiD"/>
</dbReference>
<dbReference type="InterPro" id="IPR036074">
    <property type="entry name" value="CbiD_sf"/>
</dbReference>
<dbReference type="NCBIfam" id="TIGR00312">
    <property type="entry name" value="cbiD"/>
    <property type="match status" value="1"/>
</dbReference>
<dbReference type="NCBIfam" id="NF000849">
    <property type="entry name" value="PRK00075.1-1"/>
    <property type="match status" value="1"/>
</dbReference>
<dbReference type="PANTHER" id="PTHR35863">
    <property type="entry name" value="COBALT-PRECORRIN-5B C(1)-METHYLTRANSFERASE"/>
    <property type="match status" value="1"/>
</dbReference>
<dbReference type="PANTHER" id="PTHR35863:SF1">
    <property type="entry name" value="COBALT-PRECORRIN-5B C(1)-METHYLTRANSFERASE"/>
    <property type="match status" value="1"/>
</dbReference>
<dbReference type="Pfam" id="PF01888">
    <property type="entry name" value="CbiD"/>
    <property type="match status" value="1"/>
</dbReference>
<dbReference type="PIRSF" id="PIRSF026782">
    <property type="entry name" value="CbiD"/>
    <property type="match status" value="1"/>
</dbReference>
<dbReference type="SUPFAM" id="SSF111342">
    <property type="entry name" value="CbiD-like"/>
    <property type="match status" value="1"/>
</dbReference>
<keyword id="KW-0169">Cobalamin biosynthesis</keyword>
<keyword id="KW-0489">Methyltransferase</keyword>
<keyword id="KW-0949">S-adenosyl-L-methionine</keyword>
<keyword id="KW-0808">Transferase</keyword>
<evidence type="ECO:0000255" key="1">
    <source>
        <dbReference type="HAMAP-Rule" id="MF_00787"/>
    </source>
</evidence>
<reference key="1">
    <citation type="journal article" date="2005" name="J. Bacteriol.">
        <title>Completion of the genome sequence of Brucella abortus and comparison to the highly similar genomes of Brucella melitensis and Brucella suis.</title>
        <authorList>
            <person name="Halling S.M."/>
            <person name="Peterson-Burch B.D."/>
            <person name="Bricker B.J."/>
            <person name="Zuerner R.L."/>
            <person name="Qing Z."/>
            <person name="Li L.-L."/>
            <person name="Kapur V."/>
            <person name="Alt D.P."/>
            <person name="Olsen S.C."/>
        </authorList>
    </citation>
    <scope>NUCLEOTIDE SEQUENCE [LARGE SCALE GENOMIC DNA]</scope>
    <source>
        <strain>9-941</strain>
    </source>
</reference>
<comment type="function">
    <text evidence="1">Catalyzes the methylation of C-1 in cobalt-precorrin-5B to form cobalt-precorrin-6A.</text>
</comment>
<comment type="catalytic activity">
    <reaction evidence="1">
        <text>Co-precorrin-5B + S-adenosyl-L-methionine = Co-precorrin-6A + S-adenosyl-L-homocysteine</text>
        <dbReference type="Rhea" id="RHEA:26285"/>
        <dbReference type="ChEBI" id="CHEBI:57856"/>
        <dbReference type="ChEBI" id="CHEBI:59789"/>
        <dbReference type="ChEBI" id="CHEBI:60063"/>
        <dbReference type="ChEBI" id="CHEBI:60064"/>
        <dbReference type="EC" id="2.1.1.195"/>
    </reaction>
</comment>
<comment type="pathway">
    <text evidence="1">Cofactor biosynthesis; adenosylcobalamin biosynthesis; cob(II)yrinate a,c-diamide from sirohydrochlorin (anaerobic route): step 6/10.</text>
</comment>
<comment type="similarity">
    <text evidence="1">Belongs to the CbiD family.</text>
</comment>
<feature type="chain" id="PRO_0000257748" description="Cobalt-precorrin-5B C(1)-methyltransferase">
    <location>
        <begin position="1"/>
        <end position="368"/>
    </location>
</feature>
<protein>
    <recommendedName>
        <fullName evidence="1">Cobalt-precorrin-5B C(1)-methyltransferase</fullName>
        <ecNumber evidence="1">2.1.1.195</ecNumber>
    </recommendedName>
    <alternativeName>
        <fullName evidence="1">Cobalt-precorrin-6A synthase</fullName>
    </alternativeName>
</protein>
<gene>
    <name evidence="1" type="primary">cbiD</name>
    <name type="ordered locus">BruAb1_1299</name>
</gene>
<proteinExistence type="inferred from homology"/>
<accession>Q57CK0</accession>
<sequence>MNDETTPANKNPEKAELRCGWTTGACATAATKAALTALITGEFPDPVGIILPKGEVPYFQLAYEGLGEGYAMAGIVKDAGDDPDVTHGATIISTVYPAPPGTGIIFRAGEGVGTVTREGLAIPPGEAAINPVPRRMMTEICEAICAEYGLPADLVITISVPGGEEIAQKTWNPRLGIIGGISILGTTGVVHPFSCSAWIHSIHRGIDVARAAGQKHVLGATGSTSEDAAQALYNLPDFAILDMGDFAGGVLKYLREHPIDRLTIAGGFAKLTKLAQGALDLHSSRSQVDKGFLWQIAERAGAPAGMKERILLANTAMEVLELTQSIGIDIAGPIALEARQTALKTLRGAPVEVEIIVTDRKGNILARV</sequence>
<organism>
    <name type="scientific">Brucella abortus biovar 1 (strain 9-941)</name>
    <dbReference type="NCBI Taxonomy" id="262698"/>
    <lineage>
        <taxon>Bacteria</taxon>
        <taxon>Pseudomonadati</taxon>
        <taxon>Pseudomonadota</taxon>
        <taxon>Alphaproteobacteria</taxon>
        <taxon>Hyphomicrobiales</taxon>
        <taxon>Brucellaceae</taxon>
        <taxon>Brucella/Ochrobactrum group</taxon>
        <taxon>Brucella</taxon>
    </lineage>
</organism>